<organism>
    <name type="scientific">Trichormus variabilis (strain ATCC 29413 / PCC 7937)</name>
    <name type="common">Anabaena variabilis</name>
    <dbReference type="NCBI Taxonomy" id="240292"/>
    <lineage>
        <taxon>Bacteria</taxon>
        <taxon>Bacillati</taxon>
        <taxon>Cyanobacteriota</taxon>
        <taxon>Cyanophyceae</taxon>
        <taxon>Nostocales</taxon>
        <taxon>Nostocaceae</taxon>
        <taxon>Trichormus</taxon>
    </lineage>
</organism>
<name>ISPH_TRIV2</name>
<proteinExistence type="inferred from homology"/>
<dbReference type="EC" id="1.17.7.4" evidence="1"/>
<dbReference type="EMBL" id="CP000117">
    <property type="protein sequence ID" value="ABA22560.1"/>
    <property type="molecule type" value="Genomic_DNA"/>
</dbReference>
<dbReference type="SMR" id="Q3M8X6"/>
<dbReference type="STRING" id="240292.Ava_2949"/>
<dbReference type="KEGG" id="ava:Ava_2949"/>
<dbReference type="eggNOG" id="COG0761">
    <property type="taxonomic scope" value="Bacteria"/>
</dbReference>
<dbReference type="HOGENOM" id="CLU_027486_4_0_3"/>
<dbReference type="UniPathway" id="UPA00056">
    <property type="reaction ID" value="UER00097"/>
</dbReference>
<dbReference type="UniPathway" id="UPA00059">
    <property type="reaction ID" value="UER00105"/>
</dbReference>
<dbReference type="Proteomes" id="UP000002533">
    <property type="component" value="Chromosome"/>
</dbReference>
<dbReference type="GO" id="GO:0051539">
    <property type="term" value="F:4 iron, 4 sulfur cluster binding"/>
    <property type="evidence" value="ECO:0007669"/>
    <property type="project" value="UniProtKB-UniRule"/>
</dbReference>
<dbReference type="GO" id="GO:0051745">
    <property type="term" value="F:4-hydroxy-3-methylbut-2-enyl diphosphate reductase activity"/>
    <property type="evidence" value="ECO:0007669"/>
    <property type="project" value="UniProtKB-UniRule"/>
</dbReference>
<dbReference type="GO" id="GO:0046872">
    <property type="term" value="F:metal ion binding"/>
    <property type="evidence" value="ECO:0007669"/>
    <property type="project" value="UniProtKB-KW"/>
</dbReference>
<dbReference type="GO" id="GO:0050992">
    <property type="term" value="P:dimethylallyl diphosphate biosynthetic process"/>
    <property type="evidence" value="ECO:0007669"/>
    <property type="project" value="UniProtKB-UniRule"/>
</dbReference>
<dbReference type="GO" id="GO:0019288">
    <property type="term" value="P:isopentenyl diphosphate biosynthetic process, methylerythritol 4-phosphate pathway"/>
    <property type="evidence" value="ECO:0007669"/>
    <property type="project" value="UniProtKB-UniRule"/>
</dbReference>
<dbReference type="GO" id="GO:0016114">
    <property type="term" value="P:terpenoid biosynthetic process"/>
    <property type="evidence" value="ECO:0007669"/>
    <property type="project" value="UniProtKB-UniRule"/>
</dbReference>
<dbReference type="CDD" id="cd13944">
    <property type="entry name" value="lytB_ispH"/>
    <property type="match status" value="1"/>
</dbReference>
<dbReference type="Gene3D" id="3.40.50.11270">
    <property type="match status" value="1"/>
</dbReference>
<dbReference type="Gene3D" id="3.40.1010.20">
    <property type="entry name" value="4-hydroxy-3-methylbut-2-enyl diphosphate reductase, catalytic domain"/>
    <property type="match status" value="2"/>
</dbReference>
<dbReference type="HAMAP" id="MF_00191">
    <property type="entry name" value="IspH"/>
    <property type="match status" value="1"/>
</dbReference>
<dbReference type="InterPro" id="IPR003451">
    <property type="entry name" value="LytB/IspH"/>
</dbReference>
<dbReference type="NCBIfam" id="TIGR00216">
    <property type="entry name" value="ispH_lytB"/>
    <property type="match status" value="1"/>
</dbReference>
<dbReference type="NCBIfam" id="NF009911">
    <property type="entry name" value="PRK13371.1"/>
    <property type="match status" value="1"/>
</dbReference>
<dbReference type="PANTHER" id="PTHR31619">
    <property type="entry name" value="4-HYDROXY-3-METHYLBUT-2-ENYL DIPHOSPHATE REDUCTASE, CHLOROPLASTIC"/>
    <property type="match status" value="1"/>
</dbReference>
<dbReference type="PANTHER" id="PTHR31619:SF5">
    <property type="entry name" value="4-HYDROXY-3-METHYLBUT-2-ENYL DIPHOSPHATE REDUCTASE, CHLOROPLASTIC"/>
    <property type="match status" value="1"/>
</dbReference>
<dbReference type="Pfam" id="PF02401">
    <property type="entry name" value="LYTB"/>
    <property type="match status" value="1"/>
</dbReference>
<accession>Q3M8X6</accession>
<feature type="chain" id="PRO_1000021084" description="4-hydroxy-3-methylbut-2-enyl diphosphate reductase">
    <location>
        <begin position="1"/>
        <end position="402"/>
    </location>
</feature>
<feature type="active site" description="Proton donor" evidence="1">
    <location>
        <position position="187"/>
    </location>
</feature>
<feature type="binding site" evidence="1">
    <location>
        <position position="66"/>
    </location>
    <ligand>
        <name>[4Fe-4S] cluster</name>
        <dbReference type="ChEBI" id="CHEBI:49883"/>
    </ligand>
</feature>
<feature type="binding site" evidence="1">
    <location>
        <position position="96"/>
    </location>
    <ligand>
        <name>(2E)-4-hydroxy-3-methylbut-2-enyl diphosphate</name>
        <dbReference type="ChEBI" id="CHEBI:128753"/>
    </ligand>
</feature>
<feature type="binding site" evidence="1">
    <location>
        <position position="96"/>
    </location>
    <ligand>
        <name>dimethylallyl diphosphate</name>
        <dbReference type="ChEBI" id="CHEBI:57623"/>
    </ligand>
</feature>
<feature type="binding site" evidence="1">
    <location>
        <position position="96"/>
    </location>
    <ligand>
        <name>isopentenyl diphosphate</name>
        <dbReference type="ChEBI" id="CHEBI:128769"/>
    </ligand>
</feature>
<feature type="binding site" evidence="1">
    <location>
        <position position="157"/>
    </location>
    <ligand>
        <name>[4Fe-4S] cluster</name>
        <dbReference type="ChEBI" id="CHEBI:49883"/>
    </ligand>
</feature>
<feature type="binding site" evidence="1">
    <location>
        <position position="185"/>
    </location>
    <ligand>
        <name>(2E)-4-hydroxy-3-methylbut-2-enyl diphosphate</name>
        <dbReference type="ChEBI" id="CHEBI:128753"/>
    </ligand>
</feature>
<feature type="binding site" evidence="1">
    <location>
        <position position="185"/>
    </location>
    <ligand>
        <name>dimethylallyl diphosphate</name>
        <dbReference type="ChEBI" id="CHEBI:57623"/>
    </ligand>
</feature>
<feature type="binding site" evidence="1">
    <location>
        <position position="185"/>
    </location>
    <ligand>
        <name>isopentenyl diphosphate</name>
        <dbReference type="ChEBI" id="CHEBI:128769"/>
    </ligand>
</feature>
<feature type="binding site" evidence="1">
    <location>
        <position position="250"/>
    </location>
    <ligand>
        <name>(2E)-4-hydroxy-3-methylbut-2-enyl diphosphate</name>
        <dbReference type="ChEBI" id="CHEBI:128753"/>
    </ligand>
</feature>
<feature type="binding site" evidence="1">
    <location>
        <position position="288"/>
    </location>
    <ligand>
        <name>[4Fe-4S] cluster</name>
        <dbReference type="ChEBI" id="CHEBI:49883"/>
    </ligand>
</feature>
<feature type="binding site" evidence="1">
    <location>
        <position position="317"/>
    </location>
    <ligand>
        <name>(2E)-4-hydroxy-3-methylbut-2-enyl diphosphate</name>
        <dbReference type="ChEBI" id="CHEBI:128753"/>
    </ligand>
</feature>
<feature type="binding site" evidence="1">
    <location>
        <position position="317"/>
    </location>
    <ligand>
        <name>dimethylallyl diphosphate</name>
        <dbReference type="ChEBI" id="CHEBI:57623"/>
    </ligand>
</feature>
<feature type="binding site" evidence="1">
    <location>
        <position position="317"/>
    </location>
    <ligand>
        <name>isopentenyl diphosphate</name>
        <dbReference type="ChEBI" id="CHEBI:128769"/>
    </ligand>
</feature>
<feature type="binding site" evidence="1">
    <location>
        <position position="318"/>
    </location>
    <ligand>
        <name>(2E)-4-hydroxy-3-methylbut-2-enyl diphosphate</name>
        <dbReference type="ChEBI" id="CHEBI:128753"/>
    </ligand>
</feature>
<feature type="binding site" evidence="1">
    <location>
        <position position="318"/>
    </location>
    <ligand>
        <name>dimethylallyl diphosphate</name>
        <dbReference type="ChEBI" id="CHEBI:57623"/>
    </ligand>
</feature>
<feature type="binding site" evidence="1">
    <location>
        <position position="318"/>
    </location>
    <ligand>
        <name>isopentenyl diphosphate</name>
        <dbReference type="ChEBI" id="CHEBI:128769"/>
    </ligand>
</feature>
<feature type="binding site" evidence="1">
    <location>
        <position position="319"/>
    </location>
    <ligand>
        <name>(2E)-4-hydroxy-3-methylbut-2-enyl diphosphate</name>
        <dbReference type="ChEBI" id="CHEBI:128753"/>
    </ligand>
</feature>
<feature type="binding site" evidence="1">
    <location>
        <position position="319"/>
    </location>
    <ligand>
        <name>dimethylallyl diphosphate</name>
        <dbReference type="ChEBI" id="CHEBI:57623"/>
    </ligand>
</feature>
<feature type="binding site" evidence="1">
    <location>
        <position position="319"/>
    </location>
    <ligand>
        <name>isopentenyl diphosphate</name>
        <dbReference type="ChEBI" id="CHEBI:128769"/>
    </ligand>
</feature>
<feature type="binding site" evidence="1">
    <location>
        <position position="379"/>
    </location>
    <ligand>
        <name>(2E)-4-hydroxy-3-methylbut-2-enyl diphosphate</name>
        <dbReference type="ChEBI" id="CHEBI:128753"/>
    </ligand>
</feature>
<feature type="binding site" evidence="1">
    <location>
        <position position="379"/>
    </location>
    <ligand>
        <name>dimethylallyl diphosphate</name>
        <dbReference type="ChEBI" id="CHEBI:57623"/>
    </ligand>
</feature>
<feature type="binding site" evidence="1">
    <location>
        <position position="379"/>
    </location>
    <ligand>
        <name>isopentenyl diphosphate</name>
        <dbReference type="ChEBI" id="CHEBI:128769"/>
    </ligand>
</feature>
<protein>
    <recommendedName>
        <fullName evidence="1">4-hydroxy-3-methylbut-2-enyl diphosphate reductase</fullName>
        <shortName evidence="1">HMBPP reductase</shortName>
        <ecNumber evidence="1">1.17.7.4</ecNumber>
    </recommendedName>
</protein>
<evidence type="ECO:0000255" key="1">
    <source>
        <dbReference type="HAMAP-Rule" id="MF_00191"/>
    </source>
</evidence>
<sequence>MDTKTFKRTLQHSENYNRKGFGHQAEVATQLQSEYQSSLIQEIRDRNYTLQRGDVTIRLAQAFGFCWGVERAVAMAYETRKHFPTERIWITNEIIHNPSVNQRMQEMQVGFIPVEAGNKDFSVVGNNDVVILPAFGASVQEMQLLSEKGCKIVDTTCPWVSKVWNTVEKHKKGDHTSIIHGKYKHEETIATSSFAGKYLIVLNLKEAQYVADYILHGRNREEFLQKFAKACSAGFDPDKDLERVGIANQTTMLKGETEQIGKLFEHTMLQKYGPVELNQHFQSFNTICDATQERQDAMLELVQENLDLMIVIGGFNSSNTTQLQQISQERGLPSYHIDVVERIKSVNSIEHRQLNGELVTTENWLPAGKIVVGVTSGASTPDKVVEDVIEKIFALKATTAVV</sequence>
<comment type="function">
    <text evidence="1">Catalyzes the conversion of 1-hydroxy-2-methyl-2-(E)-butenyl 4-diphosphate (HMBPP) into a mixture of isopentenyl diphosphate (IPP) and dimethylallyl diphosphate (DMAPP). Acts in the terminal step of the DOXP/MEP pathway for isoprenoid precursor biosynthesis.</text>
</comment>
<comment type="catalytic activity">
    <reaction evidence="1">
        <text>isopentenyl diphosphate + 2 oxidized [2Fe-2S]-[ferredoxin] + H2O = (2E)-4-hydroxy-3-methylbut-2-enyl diphosphate + 2 reduced [2Fe-2S]-[ferredoxin] + 2 H(+)</text>
        <dbReference type="Rhea" id="RHEA:24488"/>
        <dbReference type="Rhea" id="RHEA-COMP:10000"/>
        <dbReference type="Rhea" id="RHEA-COMP:10001"/>
        <dbReference type="ChEBI" id="CHEBI:15377"/>
        <dbReference type="ChEBI" id="CHEBI:15378"/>
        <dbReference type="ChEBI" id="CHEBI:33737"/>
        <dbReference type="ChEBI" id="CHEBI:33738"/>
        <dbReference type="ChEBI" id="CHEBI:128753"/>
        <dbReference type="ChEBI" id="CHEBI:128769"/>
        <dbReference type="EC" id="1.17.7.4"/>
    </reaction>
</comment>
<comment type="catalytic activity">
    <reaction evidence="1">
        <text>dimethylallyl diphosphate + 2 oxidized [2Fe-2S]-[ferredoxin] + H2O = (2E)-4-hydroxy-3-methylbut-2-enyl diphosphate + 2 reduced [2Fe-2S]-[ferredoxin] + 2 H(+)</text>
        <dbReference type="Rhea" id="RHEA:24825"/>
        <dbReference type="Rhea" id="RHEA-COMP:10000"/>
        <dbReference type="Rhea" id="RHEA-COMP:10001"/>
        <dbReference type="ChEBI" id="CHEBI:15377"/>
        <dbReference type="ChEBI" id="CHEBI:15378"/>
        <dbReference type="ChEBI" id="CHEBI:33737"/>
        <dbReference type="ChEBI" id="CHEBI:33738"/>
        <dbReference type="ChEBI" id="CHEBI:57623"/>
        <dbReference type="ChEBI" id="CHEBI:128753"/>
        <dbReference type="EC" id="1.17.7.4"/>
    </reaction>
</comment>
<comment type="cofactor">
    <cofactor evidence="1">
        <name>[4Fe-4S] cluster</name>
        <dbReference type="ChEBI" id="CHEBI:49883"/>
    </cofactor>
    <text evidence="1">Binds 1 [4Fe-4S] cluster per subunit.</text>
</comment>
<comment type="pathway">
    <text evidence="1">Isoprenoid biosynthesis; dimethylallyl diphosphate biosynthesis; dimethylallyl diphosphate from (2E)-4-hydroxy-3-methylbutenyl diphosphate: step 1/1.</text>
</comment>
<comment type="pathway">
    <text evidence="1">Isoprenoid biosynthesis; isopentenyl diphosphate biosynthesis via DXP pathway; isopentenyl diphosphate from 1-deoxy-D-xylulose 5-phosphate: step 6/6.</text>
</comment>
<comment type="similarity">
    <text evidence="1">Belongs to the IspH family.</text>
</comment>
<reference key="1">
    <citation type="journal article" date="2014" name="Stand. Genomic Sci.">
        <title>Complete genome sequence of Anabaena variabilis ATCC 29413.</title>
        <authorList>
            <person name="Thiel T."/>
            <person name="Pratte B.S."/>
            <person name="Zhong J."/>
            <person name="Goodwin L."/>
            <person name="Copeland A."/>
            <person name="Lucas S."/>
            <person name="Han C."/>
            <person name="Pitluck S."/>
            <person name="Land M.L."/>
            <person name="Kyrpides N.C."/>
            <person name="Woyke T."/>
        </authorList>
    </citation>
    <scope>NUCLEOTIDE SEQUENCE [LARGE SCALE GENOMIC DNA]</scope>
    <source>
        <strain>ATCC 29413 / PCC 7937</strain>
    </source>
</reference>
<gene>
    <name evidence="1" type="primary">ispH</name>
    <name type="ordered locus">Ava_2949</name>
</gene>
<keyword id="KW-0004">4Fe-4S</keyword>
<keyword id="KW-0408">Iron</keyword>
<keyword id="KW-0411">Iron-sulfur</keyword>
<keyword id="KW-0414">Isoprene biosynthesis</keyword>
<keyword id="KW-0479">Metal-binding</keyword>
<keyword id="KW-0560">Oxidoreductase</keyword>